<comment type="catalytic activity">
    <reaction evidence="1">
        <text>L-citrulline + L-aspartate + ATP = 2-(N(omega)-L-arginino)succinate + AMP + diphosphate + H(+)</text>
        <dbReference type="Rhea" id="RHEA:10932"/>
        <dbReference type="ChEBI" id="CHEBI:15378"/>
        <dbReference type="ChEBI" id="CHEBI:29991"/>
        <dbReference type="ChEBI" id="CHEBI:30616"/>
        <dbReference type="ChEBI" id="CHEBI:33019"/>
        <dbReference type="ChEBI" id="CHEBI:57472"/>
        <dbReference type="ChEBI" id="CHEBI:57743"/>
        <dbReference type="ChEBI" id="CHEBI:456215"/>
        <dbReference type="EC" id="6.3.4.5"/>
    </reaction>
</comment>
<comment type="pathway">
    <text evidence="1">Amino-acid biosynthesis; L-arginine biosynthesis; L-arginine from L-ornithine and carbamoyl phosphate: step 2/3.</text>
</comment>
<comment type="subunit">
    <text evidence="1">Homotetramer.</text>
</comment>
<comment type="subcellular location">
    <subcellularLocation>
        <location evidence="1">Cytoplasm</location>
    </subcellularLocation>
</comment>
<comment type="similarity">
    <text evidence="1">Belongs to the argininosuccinate synthase family. Type 2 subfamily.</text>
</comment>
<gene>
    <name evidence="1" type="primary">argG</name>
    <name type="ordered locus">Aave_1856</name>
</gene>
<sequence>MATILQNLPAGQKVGIAFSGGLDTSAALRWMKNKGALPYAYTANLGQPDEPDYDAIPRKAMEYGAEKARLIDCRTQLAHEGIAALQAGAFHVRTAGATYFNTTPLGRAVTGTMLVAAMKEDDVHIWGDGSTFKGNDIERFYRYGLLTNPSLKIYKPWLDQLFIDELGGRAEMSAFMTKEGFGYKMSAEKAYSTDSNMLGATHEAKDLEFLNSGMRIVNPIMGVAFWKDDVVVKAEEVSVRFEEGQPVALNGVEFNDPVELFLEANRIGGRHGLGMCDQIENRIIEAKSRGIYEAPGLALLHIAYERLVSGIHNEDTIEQYRMNGLKLGRLLYQGRWFDPQAIMLRETAQRWVARAVTGTVTLELRRGNDYSILNTESPNLTYAPERLSMEKVEDAPFSPADRIGQLTMRNLDIVDTRDKLGVYAQAGLLSLGGNAALAQLGDDSSRK</sequence>
<keyword id="KW-0028">Amino-acid biosynthesis</keyword>
<keyword id="KW-0055">Arginine biosynthesis</keyword>
<keyword id="KW-0067">ATP-binding</keyword>
<keyword id="KW-0963">Cytoplasm</keyword>
<keyword id="KW-0436">Ligase</keyword>
<keyword id="KW-0547">Nucleotide-binding</keyword>
<protein>
    <recommendedName>
        <fullName evidence="1">Argininosuccinate synthase</fullName>
        <ecNumber evidence="1">6.3.4.5</ecNumber>
    </recommendedName>
    <alternativeName>
        <fullName evidence="1">Citrulline--aspartate ligase</fullName>
    </alternativeName>
</protein>
<evidence type="ECO:0000255" key="1">
    <source>
        <dbReference type="HAMAP-Rule" id="MF_00581"/>
    </source>
</evidence>
<proteinExistence type="inferred from homology"/>
<organism>
    <name type="scientific">Paracidovorax citrulli (strain AAC00-1)</name>
    <name type="common">Acidovorax citrulli</name>
    <dbReference type="NCBI Taxonomy" id="397945"/>
    <lineage>
        <taxon>Bacteria</taxon>
        <taxon>Pseudomonadati</taxon>
        <taxon>Pseudomonadota</taxon>
        <taxon>Betaproteobacteria</taxon>
        <taxon>Burkholderiales</taxon>
        <taxon>Comamonadaceae</taxon>
        <taxon>Paracidovorax</taxon>
    </lineage>
</organism>
<accession>A1TNA2</accession>
<dbReference type="EC" id="6.3.4.5" evidence="1"/>
<dbReference type="EMBL" id="CP000512">
    <property type="protein sequence ID" value="ABM32440.1"/>
    <property type="molecule type" value="Genomic_DNA"/>
</dbReference>
<dbReference type="RefSeq" id="WP_011794986.1">
    <property type="nucleotide sequence ID" value="NC_008752.1"/>
</dbReference>
<dbReference type="SMR" id="A1TNA2"/>
<dbReference type="STRING" id="397945.Aave_1856"/>
<dbReference type="GeneID" id="79793134"/>
<dbReference type="KEGG" id="aav:Aave_1856"/>
<dbReference type="eggNOG" id="COG0137">
    <property type="taxonomic scope" value="Bacteria"/>
</dbReference>
<dbReference type="HOGENOM" id="CLU_032784_4_1_4"/>
<dbReference type="OrthoDB" id="9801641at2"/>
<dbReference type="UniPathway" id="UPA00068">
    <property type="reaction ID" value="UER00113"/>
</dbReference>
<dbReference type="Proteomes" id="UP000002596">
    <property type="component" value="Chromosome"/>
</dbReference>
<dbReference type="GO" id="GO:0005737">
    <property type="term" value="C:cytoplasm"/>
    <property type="evidence" value="ECO:0007669"/>
    <property type="project" value="UniProtKB-SubCell"/>
</dbReference>
<dbReference type="GO" id="GO:0004055">
    <property type="term" value="F:argininosuccinate synthase activity"/>
    <property type="evidence" value="ECO:0007669"/>
    <property type="project" value="UniProtKB-UniRule"/>
</dbReference>
<dbReference type="GO" id="GO:0005524">
    <property type="term" value="F:ATP binding"/>
    <property type="evidence" value="ECO:0007669"/>
    <property type="project" value="UniProtKB-UniRule"/>
</dbReference>
<dbReference type="GO" id="GO:0042803">
    <property type="term" value="F:protein homodimerization activity"/>
    <property type="evidence" value="ECO:0007669"/>
    <property type="project" value="InterPro"/>
</dbReference>
<dbReference type="GO" id="GO:0000053">
    <property type="term" value="P:argininosuccinate metabolic process"/>
    <property type="evidence" value="ECO:0007669"/>
    <property type="project" value="TreeGrafter"/>
</dbReference>
<dbReference type="GO" id="GO:0006526">
    <property type="term" value="P:L-arginine biosynthetic process"/>
    <property type="evidence" value="ECO:0007669"/>
    <property type="project" value="UniProtKB-UniRule"/>
</dbReference>
<dbReference type="GO" id="GO:0000050">
    <property type="term" value="P:urea cycle"/>
    <property type="evidence" value="ECO:0007669"/>
    <property type="project" value="TreeGrafter"/>
</dbReference>
<dbReference type="CDD" id="cd01999">
    <property type="entry name" value="ASS"/>
    <property type="match status" value="1"/>
</dbReference>
<dbReference type="FunFam" id="1.10.287.400:FF:000001">
    <property type="entry name" value="Argininosuccinate synthase"/>
    <property type="match status" value="1"/>
</dbReference>
<dbReference type="Gene3D" id="1.10.287.400">
    <property type="match status" value="1"/>
</dbReference>
<dbReference type="Gene3D" id="3.90.1260.10">
    <property type="entry name" value="Argininosuccinate synthetase, chain A, domain 2"/>
    <property type="match status" value="1"/>
</dbReference>
<dbReference type="Gene3D" id="3.40.50.620">
    <property type="entry name" value="HUPs"/>
    <property type="match status" value="1"/>
</dbReference>
<dbReference type="HAMAP" id="MF_00581">
    <property type="entry name" value="Arg_succ_synth_type2"/>
    <property type="match status" value="1"/>
</dbReference>
<dbReference type="InterPro" id="IPR023437">
    <property type="entry name" value="Arg_succ_synth_type2_subfam"/>
</dbReference>
<dbReference type="InterPro" id="IPR048268">
    <property type="entry name" value="Arginosuc_syn_C"/>
</dbReference>
<dbReference type="InterPro" id="IPR048267">
    <property type="entry name" value="Arginosuc_syn_N"/>
</dbReference>
<dbReference type="InterPro" id="IPR001518">
    <property type="entry name" value="Arginosuc_synth"/>
</dbReference>
<dbReference type="InterPro" id="IPR018223">
    <property type="entry name" value="Arginosuc_synth_CS"/>
</dbReference>
<dbReference type="InterPro" id="IPR023434">
    <property type="entry name" value="Arginosuc_synth_type_1_subfam"/>
</dbReference>
<dbReference type="InterPro" id="IPR024074">
    <property type="entry name" value="AS_cat/multimer_dom_body"/>
</dbReference>
<dbReference type="InterPro" id="IPR024073">
    <property type="entry name" value="AS_multimer_C_tail"/>
</dbReference>
<dbReference type="InterPro" id="IPR014729">
    <property type="entry name" value="Rossmann-like_a/b/a_fold"/>
</dbReference>
<dbReference type="NCBIfam" id="TIGR00032">
    <property type="entry name" value="argG"/>
    <property type="match status" value="1"/>
</dbReference>
<dbReference type="NCBIfam" id="NF003779">
    <property type="entry name" value="PRK05370.1"/>
    <property type="match status" value="1"/>
</dbReference>
<dbReference type="PANTHER" id="PTHR11587">
    <property type="entry name" value="ARGININOSUCCINATE SYNTHASE"/>
    <property type="match status" value="1"/>
</dbReference>
<dbReference type="PANTHER" id="PTHR11587:SF2">
    <property type="entry name" value="ARGININOSUCCINATE SYNTHASE"/>
    <property type="match status" value="1"/>
</dbReference>
<dbReference type="Pfam" id="PF20979">
    <property type="entry name" value="Arginosuc_syn_C"/>
    <property type="match status" value="1"/>
</dbReference>
<dbReference type="Pfam" id="PF00764">
    <property type="entry name" value="Arginosuc_synth"/>
    <property type="match status" value="1"/>
</dbReference>
<dbReference type="SUPFAM" id="SSF52402">
    <property type="entry name" value="Adenine nucleotide alpha hydrolases-like"/>
    <property type="match status" value="1"/>
</dbReference>
<dbReference type="SUPFAM" id="SSF69864">
    <property type="entry name" value="Argininosuccinate synthetase, C-terminal domain"/>
    <property type="match status" value="1"/>
</dbReference>
<dbReference type="PROSITE" id="PS00564">
    <property type="entry name" value="ARGININOSUCCIN_SYN_1"/>
    <property type="match status" value="1"/>
</dbReference>
<dbReference type="PROSITE" id="PS00565">
    <property type="entry name" value="ARGININOSUCCIN_SYN_2"/>
    <property type="match status" value="1"/>
</dbReference>
<feature type="chain" id="PRO_1000129732" description="Argininosuccinate synthase">
    <location>
        <begin position="1"/>
        <end position="447"/>
    </location>
</feature>
<feature type="binding site" evidence="1">
    <location>
        <begin position="17"/>
        <end position="25"/>
    </location>
    <ligand>
        <name>ATP</name>
        <dbReference type="ChEBI" id="CHEBI:30616"/>
    </ligand>
</feature>
<feature type="binding site" evidence="1">
    <location>
        <position position="43"/>
    </location>
    <ligand>
        <name>ATP</name>
        <dbReference type="ChEBI" id="CHEBI:30616"/>
    </ligand>
</feature>
<feature type="binding site" evidence="1">
    <location>
        <position position="99"/>
    </location>
    <ligand>
        <name>L-citrulline</name>
        <dbReference type="ChEBI" id="CHEBI:57743"/>
    </ligand>
</feature>
<feature type="binding site" evidence="1">
    <location>
        <position position="129"/>
    </location>
    <ligand>
        <name>ATP</name>
        <dbReference type="ChEBI" id="CHEBI:30616"/>
    </ligand>
</feature>
<feature type="binding site" evidence="1">
    <location>
        <position position="131"/>
    </location>
    <ligand>
        <name>ATP</name>
        <dbReference type="ChEBI" id="CHEBI:30616"/>
    </ligand>
</feature>
<feature type="binding site" evidence="1">
    <location>
        <position position="131"/>
    </location>
    <ligand>
        <name>L-aspartate</name>
        <dbReference type="ChEBI" id="CHEBI:29991"/>
    </ligand>
</feature>
<feature type="binding site" evidence="1">
    <location>
        <position position="135"/>
    </location>
    <ligand>
        <name>L-aspartate</name>
        <dbReference type="ChEBI" id="CHEBI:29991"/>
    </ligand>
</feature>
<feature type="binding site" evidence="1">
    <location>
        <position position="135"/>
    </location>
    <ligand>
        <name>L-citrulline</name>
        <dbReference type="ChEBI" id="CHEBI:57743"/>
    </ligand>
</feature>
<feature type="binding site" evidence="1">
    <location>
        <position position="136"/>
    </location>
    <ligand>
        <name>ATP</name>
        <dbReference type="ChEBI" id="CHEBI:30616"/>
    </ligand>
</feature>
<feature type="binding site" evidence="1">
    <location>
        <position position="136"/>
    </location>
    <ligand>
        <name>L-aspartate</name>
        <dbReference type="ChEBI" id="CHEBI:29991"/>
    </ligand>
</feature>
<feature type="binding site" evidence="1">
    <location>
        <position position="139"/>
    </location>
    <ligand>
        <name>L-citrulline</name>
        <dbReference type="ChEBI" id="CHEBI:57743"/>
    </ligand>
</feature>
<feature type="binding site" evidence="1">
    <location>
        <position position="192"/>
    </location>
    <ligand>
        <name>L-citrulline</name>
        <dbReference type="ChEBI" id="CHEBI:57743"/>
    </ligand>
</feature>
<feature type="binding site" evidence="1">
    <location>
        <position position="194"/>
    </location>
    <ligand>
        <name>ATP</name>
        <dbReference type="ChEBI" id="CHEBI:30616"/>
    </ligand>
</feature>
<feature type="binding site" evidence="1">
    <location>
        <position position="201"/>
    </location>
    <ligand>
        <name>L-citrulline</name>
        <dbReference type="ChEBI" id="CHEBI:57743"/>
    </ligand>
</feature>
<feature type="binding site" evidence="1">
    <location>
        <position position="203"/>
    </location>
    <ligand>
        <name>L-citrulline</name>
        <dbReference type="ChEBI" id="CHEBI:57743"/>
    </ligand>
</feature>
<feature type="binding site" evidence="1">
    <location>
        <position position="280"/>
    </location>
    <ligand>
        <name>L-citrulline</name>
        <dbReference type="ChEBI" id="CHEBI:57743"/>
    </ligand>
</feature>
<reference key="1">
    <citation type="submission" date="2006-12" db="EMBL/GenBank/DDBJ databases">
        <title>Complete sequence of Acidovorax avenae subsp. citrulli AAC00-1.</title>
        <authorList>
            <person name="Copeland A."/>
            <person name="Lucas S."/>
            <person name="Lapidus A."/>
            <person name="Barry K."/>
            <person name="Detter J.C."/>
            <person name="Glavina del Rio T."/>
            <person name="Dalin E."/>
            <person name="Tice H."/>
            <person name="Pitluck S."/>
            <person name="Kiss H."/>
            <person name="Brettin T."/>
            <person name="Bruce D."/>
            <person name="Han C."/>
            <person name="Tapia R."/>
            <person name="Gilna P."/>
            <person name="Schmutz J."/>
            <person name="Larimer F."/>
            <person name="Land M."/>
            <person name="Hauser L."/>
            <person name="Kyrpides N."/>
            <person name="Kim E."/>
            <person name="Stahl D."/>
            <person name="Richardson P."/>
        </authorList>
    </citation>
    <scope>NUCLEOTIDE SEQUENCE [LARGE SCALE GENOMIC DNA]</scope>
    <source>
        <strain>AAC00-1</strain>
    </source>
</reference>
<name>ASSY_PARC0</name>